<accession>A9BNJ8</accession>
<keyword id="KW-0997">Cell inner membrane</keyword>
<keyword id="KW-1003">Cell membrane</keyword>
<keyword id="KW-0342">GTP-binding</keyword>
<keyword id="KW-0378">Hydrolase</keyword>
<keyword id="KW-0472">Membrane</keyword>
<keyword id="KW-0547">Nucleotide-binding</keyword>
<keyword id="KW-0648">Protein biosynthesis</keyword>
<keyword id="KW-1185">Reference proteome</keyword>
<gene>
    <name evidence="1" type="primary">lepA</name>
    <name type="ordered locus">Daci_5264</name>
</gene>
<comment type="function">
    <text evidence="1">Required for accurate and efficient protein synthesis under certain stress conditions. May act as a fidelity factor of the translation reaction, by catalyzing a one-codon backward translocation of tRNAs on improperly translocated ribosomes. Back-translocation proceeds from a post-translocation (POST) complex to a pre-translocation (PRE) complex, thus giving elongation factor G a second chance to translocate the tRNAs correctly. Binds to ribosomes in a GTP-dependent manner.</text>
</comment>
<comment type="catalytic activity">
    <reaction evidence="1">
        <text>GTP + H2O = GDP + phosphate + H(+)</text>
        <dbReference type="Rhea" id="RHEA:19669"/>
        <dbReference type="ChEBI" id="CHEBI:15377"/>
        <dbReference type="ChEBI" id="CHEBI:15378"/>
        <dbReference type="ChEBI" id="CHEBI:37565"/>
        <dbReference type="ChEBI" id="CHEBI:43474"/>
        <dbReference type="ChEBI" id="CHEBI:58189"/>
        <dbReference type="EC" id="3.6.5.n1"/>
    </reaction>
</comment>
<comment type="subcellular location">
    <subcellularLocation>
        <location evidence="1">Cell inner membrane</location>
        <topology evidence="1">Peripheral membrane protein</topology>
        <orientation evidence="1">Cytoplasmic side</orientation>
    </subcellularLocation>
</comment>
<comment type="similarity">
    <text evidence="1">Belongs to the TRAFAC class translation factor GTPase superfamily. Classic translation factor GTPase family. LepA subfamily.</text>
</comment>
<protein>
    <recommendedName>
        <fullName evidence="1">Elongation factor 4</fullName>
        <shortName evidence="1">EF-4</shortName>
        <ecNumber evidence="1">3.6.5.n1</ecNumber>
    </recommendedName>
    <alternativeName>
        <fullName evidence="1">Ribosomal back-translocase LepA</fullName>
    </alternativeName>
</protein>
<proteinExistence type="inferred from homology"/>
<feature type="chain" id="PRO_1000092392" description="Elongation factor 4">
    <location>
        <begin position="1"/>
        <end position="602"/>
    </location>
</feature>
<feature type="domain" description="tr-type G">
    <location>
        <begin position="2"/>
        <end position="184"/>
    </location>
</feature>
<feature type="binding site" evidence="1">
    <location>
        <begin position="14"/>
        <end position="19"/>
    </location>
    <ligand>
        <name>GTP</name>
        <dbReference type="ChEBI" id="CHEBI:37565"/>
    </ligand>
</feature>
<feature type="binding site" evidence="1">
    <location>
        <begin position="131"/>
        <end position="134"/>
    </location>
    <ligand>
        <name>GTP</name>
        <dbReference type="ChEBI" id="CHEBI:37565"/>
    </ligand>
</feature>
<sequence>MNHIRNFSIIAHIDHGKSTLADRLIQRCGGLADRDMEAQVLDSMDIEKERGITIKAQTAALQYKAKDGQVYNLNLIDTPGHVDFSYEVSRSLSACEGALLVVDASQGVEAQTVANCYTALELGVEVTAVLNKMDLPQADPENARAEIEDVIGIDASDAIPCSAKTGMGIEEILEAVVAKVPPPKGDPNGQLRAMIIDSWFDTYVGVVMLVRVVDGELKRGERFKMMASGAAYEANNLGVFTPADVPRDVLRAGEVGYIIAGIKELKAAKVGDTITLEKKLPNNLGPATEALPGFKEIKPQVFAGLYPTEASEYDQLRDALEKLQLNDSSLQFEPEVSQALGFGFRCGFLGLLHMEIVQERLEREFDQDLITTAPSVVYEVVKGDGEVIQVENPSKMPDAGRIEEVREPIVTVHLYMPQDYVGPVMTLANQKRGVQINMQYHGRQVMLTYEMPLGEIVLDFFDKLKSVSRGYASMDYEFKEYRASDVVKVDILLNGEKVDALSIIVHRSQATYRGRAVVAKMREIISRQMFDVAIQAAIGANIIARETVKAMRKNVLAKCYGGDITRKRKLLEKQKAGKKRMKQIGSVEVPQEAFLAILQVED</sequence>
<reference key="1">
    <citation type="submission" date="2007-11" db="EMBL/GenBank/DDBJ databases">
        <title>Complete sequence of Delftia acidovorans DSM 14801 / SPH-1.</title>
        <authorList>
            <person name="Copeland A."/>
            <person name="Lucas S."/>
            <person name="Lapidus A."/>
            <person name="Barry K."/>
            <person name="Glavina del Rio T."/>
            <person name="Dalin E."/>
            <person name="Tice H."/>
            <person name="Pitluck S."/>
            <person name="Lowry S."/>
            <person name="Clum A."/>
            <person name="Schmutz J."/>
            <person name="Larimer F."/>
            <person name="Land M."/>
            <person name="Hauser L."/>
            <person name="Kyrpides N."/>
            <person name="Kim E."/>
            <person name="Schleheck D."/>
            <person name="Richardson P."/>
        </authorList>
    </citation>
    <scope>NUCLEOTIDE SEQUENCE [LARGE SCALE GENOMIC DNA]</scope>
    <source>
        <strain>DSM 14801 / SPH-1</strain>
    </source>
</reference>
<evidence type="ECO:0000255" key="1">
    <source>
        <dbReference type="HAMAP-Rule" id="MF_00071"/>
    </source>
</evidence>
<dbReference type="EC" id="3.6.5.n1" evidence="1"/>
<dbReference type="EMBL" id="CP000884">
    <property type="protein sequence ID" value="ABX37893.1"/>
    <property type="molecule type" value="Genomic_DNA"/>
</dbReference>
<dbReference type="RefSeq" id="WP_012207063.1">
    <property type="nucleotide sequence ID" value="NC_010002.1"/>
</dbReference>
<dbReference type="SMR" id="A9BNJ8"/>
<dbReference type="STRING" id="398578.Daci_5264"/>
<dbReference type="GeneID" id="24113865"/>
<dbReference type="KEGG" id="dac:Daci_5264"/>
<dbReference type="eggNOG" id="COG0481">
    <property type="taxonomic scope" value="Bacteria"/>
</dbReference>
<dbReference type="HOGENOM" id="CLU_009995_3_3_4"/>
<dbReference type="Proteomes" id="UP000000784">
    <property type="component" value="Chromosome"/>
</dbReference>
<dbReference type="GO" id="GO:0005886">
    <property type="term" value="C:plasma membrane"/>
    <property type="evidence" value="ECO:0007669"/>
    <property type="project" value="UniProtKB-SubCell"/>
</dbReference>
<dbReference type="GO" id="GO:0005525">
    <property type="term" value="F:GTP binding"/>
    <property type="evidence" value="ECO:0007669"/>
    <property type="project" value="UniProtKB-UniRule"/>
</dbReference>
<dbReference type="GO" id="GO:0003924">
    <property type="term" value="F:GTPase activity"/>
    <property type="evidence" value="ECO:0007669"/>
    <property type="project" value="UniProtKB-UniRule"/>
</dbReference>
<dbReference type="GO" id="GO:0097216">
    <property type="term" value="F:guanosine tetraphosphate binding"/>
    <property type="evidence" value="ECO:0007669"/>
    <property type="project" value="UniProtKB-ARBA"/>
</dbReference>
<dbReference type="GO" id="GO:0043022">
    <property type="term" value="F:ribosome binding"/>
    <property type="evidence" value="ECO:0007669"/>
    <property type="project" value="UniProtKB-UniRule"/>
</dbReference>
<dbReference type="GO" id="GO:0003746">
    <property type="term" value="F:translation elongation factor activity"/>
    <property type="evidence" value="ECO:0007669"/>
    <property type="project" value="UniProtKB-UniRule"/>
</dbReference>
<dbReference type="GO" id="GO:0045727">
    <property type="term" value="P:positive regulation of translation"/>
    <property type="evidence" value="ECO:0007669"/>
    <property type="project" value="UniProtKB-UniRule"/>
</dbReference>
<dbReference type="CDD" id="cd16260">
    <property type="entry name" value="EF4_III"/>
    <property type="match status" value="1"/>
</dbReference>
<dbReference type="CDD" id="cd01890">
    <property type="entry name" value="LepA"/>
    <property type="match status" value="1"/>
</dbReference>
<dbReference type="CDD" id="cd03709">
    <property type="entry name" value="lepA_C"/>
    <property type="match status" value="1"/>
</dbReference>
<dbReference type="FunFam" id="3.40.50.300:FF:000078">
    <property type="entry name" value="Elongation factor 4"/>
    <property type="match status" value="1"/>
</dbReference>
<dbReference type="FunFam" id="2.40.30.10:FF:000015">
    <property type="entry name" value="Translation factor GUF1, mitochondrial"/>
    <property type="match status" value="1"/>
</dbReference>
<dbReference type="FunFam" id="3.30.70.240:FF:000007">
    <property type="entry name" value="Translation factor GUF1, mitochondrial"/>
    <property type="match status" value="1"/>
</dbReference>
<dbReference type="FunFam" id="3.30.70.2570:FF:000001">
    <property type="entry name" value="Translation factor GUF1, mitochondrial"/>
    <property type="match status" value="1"/>
</dbReference>
<dbReference type="FunFam" id="3.30.70.870:FF:000004">
    <property type="entry name" value="Translation factor GUF1, mitochondrial"/>
    <property type="match status" value="1"/>
</dbReference>
<dbReference type="Gene3D" id="3.30.70.240">
    <property type="match status" value="1"/>
</dbReference>
<dbReference type="Gene3D" id="3.30.70.2570">
    <property type="entry name" value="Elongation factor 4, C-terminal domain"/>
    <property type="match status" value="1"/>
</dbReference>
<dbReference type="Gene3D" id="3.30.70.870">
    <property type="entry name" value="Elongation Factor G (Translational Gtpase), domain 3"/>
    <property type="match status" value="1"/>
</dbReference>
<dbReference type="Gene3D" id="3.40.50.300">
    <property type="entry name" value="P-loop containing nucleotide triphosphate hydrolases"/>
    <property type="match status" value="1"/>
</dbReference>
<dbReference type="Gene3D" id="2.40.30.10">
    <property type="entry name" value="Translation factors"/>
    <property type="match status" value="1"/>
</dbReference>
<dbReference type="HAMAP" id="MF_00071">
    <property type="entry name" value="LepA"/>
    <property type="match status" value="1"/>
</dbReference>
<dbReference type="InterPro" id="IPR006297">
    <property type="entry name" value="EF-4"/>
</dbReference>
<dbReference type="InterPro" id="IPR035647">
    <property type="entry name" value="EFG_III/V"/>
</dbReference>
<dbReference type="InterPro" id="IPR000640">
    <property type="entry name" value="EFG_V-like"/>
</dbReference>
<dbReference type="InterPro" id="IPR004161">
    <property type="entry name" value="EFTu-like_2"/>
</dbReference>
<dbReference type="InterPro" id="IPR031157">
    <property type="entry name" value="G_TR_CS"/>
</dbReference>
<dbReference type="InterPro" id="IPR038363">
    <property type="entry name" value="LepA_C_sf"/>
</dbReference>
<dbReference type="InterPro" id="IPR013842">
    <property type="entry name" value="LepA_CTD"/>
</dbReference>
<dbReference type="InterPro" id="IPR035654">
    <property type="entry name" value="LepA_IV"/>
</dbReference>
<dbReference type="InterPro" id="IPR027417">
    <property type="entry name" value="P-loop_NTPase"/>
</dbReference>
<dbReference type="InterPro" id="IPR005225">
    <property type="entry name" value="Small_GTP-bd"/>
</dbReference>
<dbReference type="InterPro" id="IPR000795">
    <property type="entry name" value="T_Tr_GTP-bd_dom"/>
</dbReference>
<dbReference type="InterPro" id="IPR009000">
    <property type="entry name" value="Transl_B-barrel_sf"/>
</dbReference>
<dbReference type="NCBIfam" id="TIGR01393">
    <property type="entry name" value="lepA"/>
    <property type="match status" value="1"/>
</dbReference>
<dbReference type="NCBIfam" id="TIGR00231">
    <property type="entry name" value="small_GTP"/>
    <property type="match status" value="1"/>
</dbReference>
<dbReference type="PANTHER" id="PTHR43512:SF4">
    <property type="entry name" value="TRANSLATION FACTOR GUF1 HOMOLOG, CHLOROPLASTIC"/>
    <property type="match status" value="1"/>
</dbReference>
<dbReference type="PANTHER" id="PTHR43512">
    <property type="entry name" value="TRANSLATION FACTOR GUF1-RELATED"/>
    <property type="match status" value="1"/>
</dbReference>
<dbReference type="Pfam" id="PF00679">
    <property type="entry name" value="EFG_C"/>
    <property type="match status" value="1"/>
</dbReference>
<dbReference type="Pfam" id="PF00009">
    <property type="entry name" value="GTP_EFTU"/>
    <property type="match status" value="1"/>
</dbReference>
<dbReference type="Pfam" id="PF03144">
    <property type="entry name" value="GTP_EFTU_D2"/>
    <property type="match status" value="1"/>
</dbReference>
<dbReference type="Pfam" id="PF06421">
    <property type="entry name" value="LepA_C"/>
    <property type="match status" value="1"/>
</dbReference>
<dbReference type="PRINTS" id="PR00315">
    <property type="entry name" value="ELONGATNFCT"/>
</dbReference>
<dbReference type="SMART" id="SM00838">
    <property type="entry name" value="EFG_C"/>
    <property type="match status" value="1"/>
</dbReference>
<dbReference type="SUPFAM" id="SSF54980">
    <property type="entry name" value="EF-G C-terminal domain-like"/>
    <property type="match status" value="2"/>
</dbReference>
<dbReference type="SUPFAM" id="SSF52540">
    <property type="entry name" value="P-loop containing nucleoside triphosphate hydrolases"/>
    <property type="match status" value="1"/>
</dbReference>
<dbReference type="SUPFAM" id="SSF50447">
    <property type="entry name" value="Translation proteins"/>
    <property type="match status" value="1"/>
</dbReference>
<dbReference type="PROSITE" id="PS00301">
    <property type="entry name" value="G_TR_1"/>
    <property type="match status" value="1"/>
</dbReference>
<dbReference type="PROSITE" id="PS51722">
    <property type="entry name" value="G_TR_2"/>
    <property type="match status" value="1"/>
</dbReference>
<organism>
    <name type="scientific">Delftia acidovorans (strain DSM 14801 / SPH-1)</name>
    <dbReference type="NCBI Taxonomy" id="398578"/>
    <lineage>
        <taxon>Bacteria</taxon>
        <taxon>Pseudomonadati</taxon>
        <taxon>Pseudomonadota</taxon>
        <taxon>Betaproteobacteria</taxon>
        <taxon>Burkholderiales</taxon>
        <taxon>Comamonadaceae</taxon>
        <taxon>Delftia</taxon>
    </lineage>
</organism>
<name>LEPA_DELAS</name>